<keyword id="KW-0221">Differentiation</keyword>
<keyword id="KW-0256">Endoplasmic reticulum</keyword>
<keyword id="KW-0443">Lipid metabolism</keyword>
<keyword id="KW-0472">Membrane</keyword>
<keyword id="KW-0492">Microsome</keyword>
<keyword id="KW-0521">NADP</keyword>
<keyword id="KW-0560">Oxidoreductase</keyword>
<keyword id="KW-1185">Reference proteome</keyword>
<keyword id="KW-0726">Sexual differentiation</keyword>
<keyword id="KW-0812">Transmembrane</keyword>
<keyword id="KW-1133">Transmembrane helix</keyword>
<feature type="chain" id="PRO_0000213680" description="3-oxo-5-alpha-steroid 4-dehydrogenase 2">
    <location>
        <begin position="1"/>
        <end position="254"/>
    </location>
</feature>
<feature type="transmembrane region" description="Helical" evidence="2">
    <location>
        <begin position="8"/>
        <end position="28"/>
    </location>
</feature>
<feature type="transmembrane region" description="Helical" evidence="2">
    <location>
        <begin position="72"/>
        <end position="92"/>
    </location>
</feature>
<feature type="transmembrane region" description="Helical" evidence="2">
    <location>
        <begin position="146"/>
        <end position="166"/>
    </location>
</feature>
<feature type="transmembrane region" description="Helical" evidence="2">
    <location>
        <begin position="206"/>
        <end position="226"/>
    </location>
</feature>
<reference key="1">
    <citation type="journal article" date="1992" name="J. Biol. Chem.">
        <title>Tissue distribution and kinetic characteristics of rat steroid 5 alpha-reductase isozymes. Evidence for distinct physiological functions.</title>
        <authorList>
            <person name="Normington K."/>
            <person name="Russell D.W."/>
        </authorList>
    </citation>
    <scope>NUCLEOTIDE SEQUENCE [MRNA]</scope>
    <scope>CATALYTIC ACTIVITY</scope>
    <scope>BIOPHYSICOCHEMICAL PROPERTIES</scope>
    <scope>TISSUE SPECIFICITY</scope>
    <source>
        <tissue>Testis</tissue>
    </source>
</reference>
<sequence>MQIVCHQVPVLAGSATLATMGTLILCLGKPASYGKHTESVSSGVPFLPARIAWFLQELPSFVVSVGMLAWQPRSLFGPPGNVLLALFSAHYFHRTFIYSLLTRGRPFPAVLFLRATAFCIGNGLLQAYYLVYCAEYPEEWYTDVRFSFGVFLFILGMGINIHSDYTLRQLRKPGEVIYRIPRGGLFTYVSGANFLGEIIEWIGYALATWSVPAFAFAFFTLCFLGMQAFYHHRFYLKMFKDYPKSRKALIPFIF</sequence>
<gene>
    <name type="primary">Srd5a2</name>
</gene>
<organism>
    <name type="scientific">Rattus norvegicus</name>
    <name type="common">Rat</name>
    <dbReference type="NCBI Taxonomy" id="10116"/>
    <lineage>
        <taxon>Eukaryota</taxon>
        <taxon>Metazoa</taxon>
        <taxon>Chordata</taxon>
        <taxon>Craniata</taxon>
        <taxon>Vertebrata</taxon>
        <taxon>Euteleostomi</taxon>
        <taxon>Mammalia</taxon>
        <taxon>Eutheria</taxon>
        <taxon>Euarchontoglires</taxon>
        <taxon>Glires</taxon>
        <taxon>Rodentia</taxon>
        <taxon>Myomorpha</taxon>
        <taxon>Muroidea</taxon>
        <taxon>Muridae</taxon>
        <taxon>Murinae</taxon>
        <taxon>Rattus</taxon>
    </lineage>
</organism>
<accession>P31214</accession>
<evidence type="ECO:0000250" key="1">
    <source>
        <dbReference type="UniProtKB" id="P31213"/>
    </source>
</evidence>
<evidence type="ECO:0000255" key="2"/>
<evidence type="ECO:0000269" key="3">
    <source>
    </source>
</evidence>
<evidence type="ECO:0000305" key="4"/>
<evidence type="ECO:0000305" key="5">
    <source>
    </source>
</evidence>
<dbReference type="EC" id="1.3.1.22" evidence="3"/>
<dbReference type="EMBL" id="M95058">
    <property type="protein sequence ID" value="AAA42182.1"/>
    <property type="molecule type" value="mRNA"/>
</dbReference>
<dbReference type="PIR" id="A44104">
    <property type="entry name" value="A44104"/>
</dbReference>
<dbReference type="RefSeq" id="NP_073202.1">
    <property type="nucleotide sequence ID" value="NM_022711.5"/>
</dbReference>
<dbReference type="SMR" id="P31214"/>
<dbReference type="FunCoup" id="P31214">
    <property type="interactions" value="5"/>
</dbReference>
<dbReference type="STRING" id="10116.ENSRNOP00000009254"/>
<dbReference type="BindingDB" id="P31214"/>
<dbReference type="ChEMBL" id="CHEMBL5099"/>
<dbReference type="DrugCentral" id="P31214"/>
<dbReference type="PhosphoSitePlus" id="P31214"/>
<dbReference type="PaxDb" id="10116-ENSRNOP00000009254"/>
<dbReference type="Ensembl" id="ENSRNOT00000008983.8">
    <property type="protein sequence ID" value="ENSRNOP00000009254.4"/>
    <property type="gene ID" value="ENSRNOG00000027042.7"/>
</dbReference>
<dbReference type="GeneID" id="64677"/>
<dbReference type="KEGG" id="rno:64677"/>
<dbReference type="UCSC" id="RGD:621480">
    <property type="organism name" value="rat"/>
</dbReference>
<dbReference type="AGR" id="RGD:621480"/>
<dbReference type="CTD" id="6716"/>
<dbReference type="RGD" id="621480">
    <property type="gene designation" value="Srd5a2"/>
</dbReference>
<dbReference type="eggNOG" id="KOG1638">
    <property type="taxonomic scope" value="Eukaryota"/>
</dbReference>
<dbReference type="GeneTree" id="ENSGT00950000182886"/>
<dbReference type="HOGENOM" id="CLU_065395_1_1_1"/>
<dbReference type="InParanoid" id="P31214"/>
<dbReference type="OMA" id="PEEWYTD"/>
<dbReference type="OrthoDB" id="5788137at2759"/>
<dbReference type="PhylomeDB" id="P31214"/>
<dbReference type="TreeFam" id="TF314668"/>
<dbReference type="BRENDA" id="1.3.1.22">
    <property type="organism ID" value="5301"/>
</dbReference>
<dbReference type="Reactome" id="R-RNO-193048">
    <property type="pathway name" value="Androgen biosynthesis"/>
</dbReference>
<dbReference type="SABIO-RK" id="P31214"/>
<dbReference type="PRO" id="PR:P31214"/>
<dbReference type="Proteomes" id="UP000002494">
    <property type="component" value="Chromosome 6"/>
</dbReference>
<dbReference type="Bgee" id="ENSRNOG00000027042">
    <property type="expression patterns" value="Expressed in duodenum and 4 other cell types or tissues"/>
</dbReference>
<dbReference type="GO" id="GO:0070852">
    <property type="term" value="C:cell body fiber"/>
    <property type="evidence" value="ECO:0000314"/>
    <property type="project" value="RGD"/>
</dbReference>
<dbReference type="GO" id="GO:0005789">
    <property type="term" value="C:endoplasmic reticulum membrane"/>
    <property type="evidence" value="ECO:0007669"/>
    <property type="project" value="UniProtKB-SubCell"/>
</dbReference>
<dbReference type="GO" id="GO:0043025">
    <property type="term" value="C:neuronal cell body"/>
    <property type="evidence" value="ECO:0000314"/>
    <property type="project" value="RGD"/>
</dbReference>
<dbReference type="GO" id="GO:0047751">
    <property type="term" value="F:3-oxo-5-alpha-steroid 4-dehydrogenase (NADP+) activity"/>
    <property type="evidence" value="ECO:0000266"/>
    <property type="project" value="RGD"/>
</dbReference>
<dbReference type="GO" id="GO:0003865">
    <property type="term" value="F:3-oxo-5-alpha-steroid 4-dehydrogenase activity"/>
    <property type="evidence" value="ECO:0000314"/>
    <property type="project" value="RGD"/>
</dbReference>
<dbReference type="GO" id="GO:0033218">
    <property type="term" value="F:amide binding"/>
    <property type="evidence" value="ECO:0000353"/>
    <property type="project" value="RGD"/>
</dbReference>
<dbReference type="GO" id="GO:0030283">
    <property type="term" value="F:testosterone dehydrogenase [NAD(P)+] activity"/>
    <property type="evidence" value="ECO:0000250"/>
    <property type="project" value="UniProtKB"/>
</dbReference>
<dbReference type="GO" id="GO:0006702">
    <property type="term" value="P:androgen biosynthetic process"/>
    <property type="evidence" value="ECO:0000314"/>
    <property type="project" value="RGD"/>
</dbReference>
<dbReference type="GO" id="GO:0008209">
    <property type="term" value="P:androgen metabolic process"/>
    <property type="evidence" value="ECO:0000314"/>
    <property type="project" value="RGD"/>
</dbReference>
<dbReference type="GO" id="GO:0018879">
    <property type="term" value="P:biphenyl metabolic process"/>
    <property type="evidence" value="ECO:0000270"/>
    <property type="project" value="RGD"/>
</dbReference>
<dbReference type="GO" id="GO:0060348">
    <property type="term" value="P:bone development"/>
    <property type="evidence" value="ECO:0000270"/>
    <property type="project" value="RGD"/>
</dbReference>
<dbReference type="GO" id="GO:0030154">
    <property type="term" value="P:cell differentiation"/>
    <property type="evidence" value="ECO:0007669"/>
    <property type="project" value="UniProtKB-KW"/>
</dbReference>
<dbReference type="GO" id="GO:0018894">
    <property type="term" value="P:dibenzo-p-dioxin metabolic process"/>
    <property type="evidence" value="ECO:0000270"/>
    <property type="project" value="RGD"/>
</dbReference>
<dbReference type="GO" id="GO:0030540">
    <property type="term" value="P:female genitalia development"/>
    <property type="evidence" value="ECO:0000270"/>
    <property type="project" value="RGD"/>
</dbReference>
<dbReference type="GO" id="GO:0021766">
    <property type="term" value="P:hippocampus development"/>
    <property type="evidence" value="ECO:0000270"/>
    <property type="project" value="RGD"/>
</dbReference>
<dbReference type="GO" id="GO:0021854">
    <property type="term" value="P:hypothalamus development"/>
    <property type="evidence" value="ECO:0000270"/>
    <property type="project" value="RGD"/>
</dbReference>
<dbReference type="GO" id="GO:0030539">
    <property type="term" value="P:male genitalia development"/>
    <property type="evidence" value="ECO:0000270"/>
    <property type="project" value="RGD"/>
</dbReference>
<dbReference type="GO" id="GO:0008584">
    <property type="term" value="P:male gonad development"/>
    <property type="evidence" value="ECO:0000270"/>
    <property type="project" value="RGD"/>
</dbReference>
<dbReference type="GO" id="GO:0018963">
    <property type="term" value="P:phthalate metabolic process"/>
    <property type="evidence" value="ECO:0000270"/>
    <property type="project" value="RGD"/>
</dbReference>
<dbReference type="GO" id="GO:1904614">
    <property type="term" value="P:response to biphenyl"/>
    <property type="evidence" value="ECO:0000314"/>
    <property type="project" value="RGD"/>
</dbReference>
<dbReference type="GO" id="GO:0032354">
    <property type="term" value="P:response to follicle-stimulating hormone"/>
    <property type="evidence" value="ECO:0000270"/>
    <property type="project" value="RGD"/>
</dbReference>
<dbReference type="GO" id="GO:0031667">
    <property type="term" value="P:response to nutrient levels"/>
    <property type="evidence" value="ECO:0000270"/>
    <property type="project" value="RGD"/>
</dbReference>
<dbReference type="GO" id="GO:0043434">
    <property type="term" value="P:response to peptide hormone"/>
    <property type="evidence" value="ECO:0000314"/>
    <property type="project" value="RGD"/>
</dbReference>
<dbReference type="GO" id="GO:0048545">
    <property type="term" value="P:response to steroid hormone"/>
    <property type="evidence" value="ECO:0000270"/>
    <property type="project" value="RGD"/>
</dbReference>
<dbReference type="GO" id="GO:0033574">
    <property type="term" value="P:response to testosterone"/>
    <property type="evidence" value="ECO:0000270"/>
    <property type="project" value="RGD"/>
</dbReference>
<dbReference type="GO" id="GO:0009410">
    <property type="term" value="P:response to xenobiotic stimulus"/>
    <property type="evidence" value="ECO:0000270"/>
    <property type="project" value="RGD"/>
</dbReference>
<dbReference type="GO" id="GO:0007548">
    <property type="term" value="P:sex differentiation"/>
    <property type="evidence" value="ECO:0000304"/>
    <property type="project" value="RGD"/>
</dbReference>
<dbReference type="GO" id="GO:0006694">
    <property type="term" value="P:steroid biosynthetic process"/>
    <property type="evidence" value="ECO:0000314"/>
    <property type="project" value="RGD"/>
</dbReference>
<dbReference type="GO" id="GO:0006706">
    <property type="term" value="P:steroid catabolic process"/>
    <property type="evidence" value="ECO:0000314"/>
    <property type="project" value="RGD"/>
</dbReference>
<dbReference type="GO" id="GO:0061370">
    <property type="term" value="P:testosterone biosynthetic process"/>
    <property type="evidence" value="ECO:0000250"/>
    <property type="project" value="UniProtKB"/>
</dbReference>
<dbReference type="FunFam" id="1.20.120.1630:FF:000002">
    <property type="entry name" value="Steroid 5 alpha-reductase 1"/>
    <property type="match status" value="1"/>
</dbReference>
<dbReference type="Gene3D" id="1.20.120.1630">
    <property type="match status" value="1"/>
</dbReference>
<dbReference type="InterPro" id="IPR016636">
    <property type="entry name" value="3-oxo-5-alpha-steroid_4-DH"/>
</dbReference>
<dbReference type="InterPro" id="IPR001104">
    <property type="entry name" value="3-oxo-5_a-steroid_4-DH_C"/>
</dbReference>
<dbReference type="InterPro" id="IPR039357">
    <property type="entry name" value="SRD5A/TECR"/>
</dbReference>
<dbReference type="PANTHER" id="PTHR10556">
    <property type="entry name" value="3-OXO-5-ALPHA-STEROID 4-DEHYDROGENASE"/>
    <property type="match status" value="1"/>
</dbReference>
<dbReference type="PANTHER" id="PTHR10556:SF37">
    <property type="entry name" value="3-OXO-5-ALPHA-STEROID 4-DEHYDROGENASE 2"/>
    <property type="match status" value="1"/>
</dbReference>
<dbReference type="Pfam" id="PF02544">
    <property type="entry name" value="Steroid_dh"/>
    <property type="match status" value="1"/>
</dbReference>
<dbReference type="PIRSF" id="PIRSF015596">
    <property type="entry name" value="5_alpha-SR2"/>
    <property type="match status" value="1"/>
</dbReference>
<dbReference type="PROSITE" id="PS50244">
    <property type="entry name" value="S5A_REDUCTASE"/>
    <property type="match status" value="1"/>
</dbReference>
<name>S5A2_RAT</name>
<protein>
    <recommendedName>
        <fullName>3-oxo-5-alpha-steroid 4-dehydrogenase 2</fullName>
        <ecNumber evidence="3">1.3.1.22</ecNumber>
    </recommendedName>
    <alternativeName>
        <fullName>5 alpha-SR2</fullName>
    </alternativeName>
    <alternativeName>
        <fullName>SR type 2</fullName>
    </alternativeName>
    <alternativeName>
        <fullName>Steroid 5-alpha-reductase 2</fullName>
        <shortName>S5AR 2</shortName>
    </alternativeName>
</protein>
<comment type="function">
    <text evidence="1 3">Converts testosterone (T) into 5-alpha-dihydrotestosterone (DHT) and progesterone or corticosterone into their corresponding 5-alpha-3-oxosteroids (PubMed:1527072). It plays a central role in sexual differentiation and androgen physiology (By similarity).</text>
</comment>
<comment type="catalytic activity">
    <reaction evidence="3">
        <text>a 3-oxo-5alpha-steroid + NADP(+) = a 3-oxo-Delta(4)-steroid + NADPH + H(+)</text>
        <dbReference type="Rhea" id="RHEA:54384"/>
        <dbReference type="ChEBI" id="CHEBI:13601"/>
        <dbReference type="ChEBI" id="CHEBI:15378"/>
        <dbReference type="ChEBI" id="CHEBI:47909"/>
        <dbReference type="ChEBI" id="CHEBI:57783"/>
        <dbReference type="ChEBI" id="CHEBI:58349"/>
        <dbReference type="EC" id="1.3.1.22"/>
    </reaction>
</comment>
<comment type="catalytic activity">
    <reaction evidence="3">
        <text>17beta-hydroxy-5alpha-androstan-3-one + NADP(+) = testosterone + NADPH + H(+)</text>
        <dbReference type="Rhea" id="RHEA:50820"/>
        <dbReference type="ChEBI" id="CHEBI:15378"/>
        <dbReference type="ChEBI" id="CHEBI:16330"/>
        <dbReference type="ChEBI" id="CHEBI:17347"/>
        <dbReference type="ChEBI" id="CHEBI:57783"/>
        <dbReference type="ChEBI" id="CHEBI:58349"/>
        <dbReference type="EC" id="1.3.1.22"/>
    </reaction>
    <physiologicalReaction direction="right-to-left" evidence="5">
        <dbReference type="Rhea" id="RHEA:50822"/>
    </physiologicalReaction>
</comment>
<comment type="catalytic activity">
    <reaction evidence="3">
        <text>5alpha-pregnane-3,20-dione + NADP(+) = progesterone + NADPH + H(+)</text>
        <dbReference type="Rhea" id="RHEA:21952"/>
        <dbReference type="ChEBI" id="CHEBI:15378"/>
        <dbReference type="ChEBI" id="CHEBI:17026"/>
        <dbReference type="ChEBI" id="CHEBI:28952"/>
        <dbReference type="ChEBI" id="CHEBI:57783"/>
        <dbReference type="ChEBI" id="CHEBI:58349"/>
        <dbReference type="EC" id="1.3.1.22"/>
    </reaction>
    <physiologicalReaction direction="right-to-left" evidence="5">
        <dbReference type="Rhea" id="RHEA:21954"/>
    </physiologicalReaction>
</comment>
<comment type="biophysicochemical properties">
    <kinetics>
        <KM evidence="3">74 nM for testosterone</KM>
        <KM evidence="3">42 nM for progesterone</KM>
        <KM evidence="3">170 nM for androstenedione</KM>
        <KM evidence="3">376 nM for corticosterone</KM>
        <KM evidence="3">11.2 uM for cortisol</KM>
        <Vmax evidence="3">0.5 nmol/min/mg enzyme</Vmax>
    </kinetics>
    <phDependence>
        <text evidence="3">Optimally active at acidic pHs.</text>
    </phDependence>
</comment>
<comment type="subcellular location">
    <subcellularLocation>
        <location>Microsome membrane</location>
        <topology>Multi-pass membrane protein</topology>
    </subcellularLocation>
    <subcellularLocation>
        <location evidence="4">Endoplasmic reticulum membrane</location>
        <topology evidence="4">Multi-pass membrane protein</topology>
    </subcellularLocation>
</comment>
<comment type="tissue specificity">
    <text evidence="3">Expressed in high levels in the prostate and many other androgen-sensitive tissues.</text>
</comment>
<comment type="similarity">
    <text evidence="4">Belongs to the steroid 5-alpha reductase family.</text>
</comment>
<proteinExistence type="evidence at protein level"/>